<sequence length="628" mass="69022">MNLEEIQDPSFLKNYSNKQLEELAADIRRFLIEKLSATGGHIGPNLGVVELTLALHQLFDSPKDKLLWDVGHQAYVHKILTGRAPQFDTLRQYKGLCGFPKRTESEHDVWETGHSSTSLSGAMGMATARDLKGTNENIVAIIGDGALTGGMALEALNHIGHEQKHLIVVLNDNEMSIAPNVGALHSILGRLRTAGKYQKAKEDLETIIRKIPAFGGKLADTAERLKDSLKYLMVSGMFFEEMGFTYLGPVDGHDLDDLKHQLSYAKKTSGPVLVHVLTKKGKGYKPAEEDATGAWHGTGPYKMESGEMVKKPGPPSYPSVFANTLKRIAREDERVVAITPAMPGGSKLDLFAEEFPDRMFDVGIAEQHAATMSAGLATQGMKPVYAVYSTFLQRGYDQVVHDICRQNLNVLIAIDRAGLVGADGETHQGVFDIAFLRSLPNITILNPKDENEFQHMLYTGICYDDGPIAIRYPRGNGTGVKMDASLSRLPIGKWNVLQEGTDAAILTFGTMIPVAEKALAQLKQAGYNIRLINANSVKPLDEKLLEALAEEELPLLTIEESVLQGGFGSAVLEFYNEKGMHVELKRMGIPDYFVEHGSVSELYQEVGLTPERIADTLISMLPQKRKRA</sequence>
<reference key="1">
    <citation type="submission" date="2003-10" db="EMBL/GenBank/DDBJ databases">
        <title>The complete genome sequence of the alkaliphilic Bacillus clausii KSM-K16.</title>
        <authorList>
            <person name="Takaki Y."/>
            <person name="Kageyama Y."/>
            <person name="Shimamura S."/>
            <person name="Suzuki H."/>
            <person name="Nishi S."/>
            <person name="Hatada Y."/>
            <person name="Kawai S."/>
            <person name="Ito S."/>
            <person name="Horikoshi K."/>
        </authorList>
    </citation>
    <scope>NUCLEOTIDE SEQUENCE [LARGE SCALE GENOMIC DNA]</scope>
    <source>
        <strain>KSM-K16</strain>
    </source>
</reference>
<name>DXS_SHOC1</name>
<organism>
    <name type="scientific">Shouchella clausii (strain KSM-K16)</name>
    <name type="common">Alkalihalobacillus clausii</name>
    <dbReference type="NCBI Taxonomy" id="66692"/>
    <lineage>
        <taxon>Bacteria</taxon>
        <taxon>Bacillati</taxon>
        <taxon>Bacillota</taxon>
        <taxon>Bacilli</taxon>
        <taxon>Bacillales</taxon>
        <taxon>Bacillaceae</taxon>
        <taxon>Shouchella</taxon>
    </lineage>
</organism>
<evidence type="ECO:0000255" key="1">
    <source>
        <dbReference type="HAMAP-Rule" id="MF_00315"/>
    </source>
</evidence>
<feature type="chain" id="PRO_0000256379" description="1-deoxy-D-xylulose-5-phosphate synthase">
    <location>
        <begin position="1"/>
        <end position="628"/>
    </location>
</feature>
<feature type="binding site" evidence="1">
    <location>
        <position position="72"/>
    </location>
    <ligand>
        <name>thiamine diphosphate</name>
        <dbReference type="ChEBI" id="CHEBI:58937"/>
    </ligand>
</feature>
<feature type="binding site" evidence="1">
    <location>
        <begin position="113"/>
        <end position="115"/>
    </location>
    <ligand>
        <name>thiamine diphosphate</name>
        <dbReference type="ChEBI" id="CHEBI:58937"/>
    </ligand>
</feature>
<feature type="binding site" evidence="1">
    <location>
        <position position="144"/>
    </location>
    <ligand>
        <name>Mg(2+)</name>
        <dbReference type="ChEBI" id="CHEBI:18420"/>
    </ligand>
</feature>
<feature type="binding site" evidence="1">
    <location>
        <begin position="145"/>
        <end position="146"/>
    </location>
    <ligand>
        <name>thiamine diphosphate</name>
        <dbReference type="ChEBI" id="CHEBI:58937"/>
    </ligand>
</feature>
<feature type="binding site" evidence="1">
    <location>
        <position position="173"/>
    </location>
    <ligand>
        <name>Mg(2+)</name>
        <dbReference type="ChEBI" id="CHEBI:18420"/>
    </ligand>
</feature>
<feature type="binding site" evidence="1">
    <location>
        <position position="173"/>
    </location>
    <ligand>
        <name>thiamine diphosphate</name>
        <dbReference type="ChEBI" id="CHEBI:58937"/>
    </ligand>
</feature>
<feature type="binding site" evidence="1">
    <location>
        <position position="284"/>
    </location>
    <ligand>
        <name>thiamine diphosphate</name>
        <dbReference type="ChEBI" id="CHEBI:58937"/>
    </ligand>
</feature>
<feature type="binding site" evidence="1">
    <location>
        <position position="366"/>
    </location>
    <ligand>
        <name>thiamine diphosphate</name>
        <dbReference type="ChEBI" id="CHEBI:58937"/>
    </ligand>
</feature>
<dbReference type="EC" id="2.2.1.7" evidence="1"/>
<dbReference type="EMBL" id="AP006627">
    <property type="protein sequence ID" value="BAD64997.1"/>
    <property type="molecule type" value="Genomic_DNA"/>
</dbReference>
<dbReference type="RefSeq" id="WP_011247305.1">
    <property type="nucleotide sequence ID" value="NC_006582.1"/>
</dbReference>
<dbReference type="SMR" id="Q5WF63"/>
<dbReference type="STRING" id="66692.ABC2462"/>
<dbReference type="KEGG" id="bcl:ABC2462"/>
<dbReference type="eggNOG" id="COG1154">
    <property type="taxonomic scope" value="Bacteria"/>
</dbReference>
<dbReference type="HOGENOM" id="CLU_009227_1_4_9"/>
<dbReference type="OrthoDB" id="9803371at2"/>
<dbReference type="UniPathway" id="UPA00064">
    <property type="reaction ID" value="UER00091"/>
</dbReference>
<dbReference type="Proteomes" id="UP000001168">
    <property type="component" value="Chromosome"/>
</dbReference>
<dbReference type="GO" id="GO:0005829">
    <property type="term" value="C:cytosol"/>
    <property type="evidence" value="ECO:0007669"/>
    <property type="project" value="TreeGrafter"/>
</dbReference>
<dbReference type="GO" id="GO:0008661">
    <property type="term" value="F:1-deoxy-D-xylulose-5-phosphate synthase activity"/>
    <property type="evidence" value="ECO:0007669"/>
    <property type="project" value="UniProtKB-UniRule"/>
</dbReference>
<dbReference type="GO" id="GO:0000287">
    <property type="term" value="F:magnesium ion binding"/>
    <property type="evidence" value="ECO:0007669"/>
    <property type="project" value="UniProtKB-UniRule"/>
</dbReference>
<dbReference type="GO" id="GO:0030976">
    <property type="term" value="F:thiamine pyrophosphate binding"/>
    <property type="evidence" value="ECO:0007669"/>
    <property type="project" value="UniProtKB-UniRule"/>
</dbReference>
<dbReference type="GO" id="GO:0052865">
    <property type="term" value="P:1-deoxy-D-xylulose 5-phosphate biosynthetic process"/>
    <property type="evidence" value="ECO:0007669"/>
    <property type="project" value="UniProtKB-UniPathway"/>
</dbReference>
<dbReference type="GO" id="GO:0019288">
    <property type="term" value="P:isopentenyl diphosphate biosynthetic process, methylerythritol 4-phosphate pathway"/>
    <property type="evidence" value="ECO:0007669"/>
    <property type="project" value="TreeGrafter"/>
</dbReference>
<dbReference type="GO" id="GO:0016114">
    <property type="term" value="P:terpenoid biosynthetic process"/>
    <property type="evidence" value="ECO:0007669"/>
    <property type="project" value="UniProtKB-UniRule"/>
</dbReference>
<dbReference type="GO" id="GO:0009228">
    <property type="term" value="P:thiamine biosynthetic process"/>
    <property type="evidence" value="ECO:0007669"/>
    <property type="project" value="UniProtKB-UniRule"/>
</dbReference>
<dbReference type="CDD" id="cd02007">
    <property type="entry name" value="TPP_DXS"/>
    <property type="match status" value="1"/>
</dbReference>
<dbReference type="CDD" id="cd07033">
    <property type="entry name" value="TPP_PYR_DXS_TK_like"/>
    <property type="match status" value="1"/>
</dbReference>
<dbReference type="FunFam" id="3.40.50.920:FF:000002">
    <property type="entry name" value="1-deoxy-D-xylulose-5-phosphate synthase"/>
    <property type="match status" value="1"/>
</dbReference>
<dbReference type="FunFam" id="3.40.50.970:FF:000030">
    <property type="entry name" value="1-deoxy-D-xylulose-5-phosphate synthase"/>
    <property type="match status" value="1"/>
</dbReference>
<dbReference type="Gene3D" id="3.40.50.920">
    <property type="match status" value="1"/>
</dbReference>
<dbReference type="Gene3D" id="3.40.50.970">
    <property type="match status" value="2"/>
</dbReference>
<dbReference type="HAMAP" id="MF_00315">
    <property type="entry name" value="DXP_synth"/>
    <property type="match status" value="1"/>
</dbReference>
<dbReference type="InterPro" id="IPR005477">
    <property type="entry name" value="Dxylulose-5-P_synthase"/>
</dbReference>
<dbReference type="InterPro" id="IPR029061">
    <property type="entry name" value="THDP-binding"/>
</dbReference>
<dbReference type="InterPro" id="IPR009014">
    <property type="entry name" value="Transketo_C/PFOR_II"/>
</dbReference>
<dbReference type="InterPro" id="IPR005475">
    <property type="entry name" value="Transketolase-like_Pyr-bd"/>
</dbReference>
<dbReference type="InterPro" id="IPR020826">
    <property type="entry name" value="Transketolase_BS"/>
</dbReference>
<dbReference type="InterPro" id="IPR033248">
    <property type="entry name" value="Transketolase_C"/>
</dbReference>
<dbReference type="InterPro" id="IPR049557">
    <property type="entry name" value="Transketolase_CS"/>
</dbReference>
<dbReference type="NCBIfam" id="TIGR00204">
    <property type="entry name" value="dxs"/>
    <property type="match status" value="1"/>
</dbReference>
<dbReference type="NCBIfam" id="NF003933">
    <property type="entry name" value="PRK05444.2-2"/>
    <property type="match status" value="1"/>
</dbReference>
<dbReference type="PANTHER" id="PTHR43322">
    <property type="entry name" value="1-D-DEOXYXYLULOSE 5-PHOSPHATE SYNTHASE-RELATED"/>
    <property type="match status" value="1"/>
</dbReference>
<dbReference type="PANTHER" id="PTHR43322:SF5">
    <property type="entry name" value="1-DEOXY-D-XYLULOSE-5-PHOSPHATE SYNTHASE, CHLOROPLASTIC"/>
    <property type="match status" value="1"/>
</dbReference>
<dbReference type="Pfam" id="PF13292">
    <property type="entry name" value="DXP_synthase_N"/>
    <property type="match status" value="1"/>
</dbReference>
<dbReference type="Pfam" id="PF02779">
    <property type="entry name" value="Transket_pyr"/>
    <property type="match status" value="1"/>
</dbReference>
<dbReference type="Pfam" id="PF02780">
    <property type="entry name" value="Transketolase_C"/>
    <property type="match status" value="1"/>
</dbReference>
<dbReference type="SMART" id="SM00861">
    <property type="entry name" value="Transket_pyr"/>
    <property type="match status" value="1"/>
</dbReference>
<dbReference type="SUPFAM" id="SSF52518">
    <property type="entry name" value="Thiamin diphosphate-binding fold (THDP-binding)"/>
    <property type="match status" value="2"/>
</dbReference>
<dbReference type="SUPFAM" id="SSF52922">
    <property type="entry name" value="TK C-terminal domain-like"/>
    <property type="match status" value="1"/>
</dbReference>
<dbReference type="PROSITE" id="PS00801">
    <property type="entry name" value="TRANSKETOLASE_1"/>
    <property type="match status" value="1"/>
</dbReference>
<dbReference type="PROSITE" id="PS00802">
    <property type="entry name" value="TRANSKETOLASE_2"/>
    <property type="match status" value="1"/>
</dbReference>
<proteinExistence type="inferred from homology"/>
<gene>
    <name evidence="1" type="primary">dxs</name>
    <name type="ordered locus">ABC2462</name>
</gene>
<comment type="function">
    <text evidence="1">Catalyzes the acyloin condensation reaction between C atoms 2 and 3 of pyruvate and glyceraldehyde 3-phosphate to yield 1-deoxy-D-xylulose-5-phosphate (DXP).</text>
</comment>
<comment type="catalytic activity">
    <reaction evidence="1">
        <text>D-glyceraldehyde 3-phosphate + pyruvate + H(+) = 1-deoxy-D-xylulose 5-phosphate + CO2</text>
        <dbReference type="Rhea" id="RHEA:12605"/>
        <dbReference type="ChEBI" id="CHEBI:15361"/>
        <dbReference type="ChEBI" id="CHEBI:15378"/>
        <dbReference type="ChEBI" id="CHEBI:16526"/>
        <dbReference type="ChEBI" id="CHEBI:57792"/>
        <dbReference type="ChEBI" id="CHEBI:59776"/>
        <dbReference type="EC" id="2.2.1.7"/>
    </reaction>
</comment>
<comment type="cofactor">
    <cofactor evidence="1">
        <name>Mg(2+)</name>
        <dbReference type="ChEBI" id="CHEBI:18420"/>
    </cofactor>
    <text evidence="1">Binds 1 Mg(2+) ion per subunit.</text>
</comment>
<comment type="cofactor">
    <cofactor evidence="1">
        <name>thiamine diphosphate</name>
        <dbReference type="ChEBI" id="CHEBI:58937"/>
    </cofactor>
    <text evidence="1">Binds 1 thiamine pyrophosphate per subunit.</text>
</comment>
<comment type="pathway">
    <text evidence="1">Metabolic intermediate biosynthesis; 1-deoxy-D-xylulose 5-phosphate biosynthesis; 1-deoxy-D-xylulose 5-phosphate from D-glyceraldehyde 3-phosphate and pyruvate: step 1/1.</text>
</comment>
<comment type="subunit">
    <text evidence="1">Homodimer.</text>
</comment>
<comment type="similarity">
    <text evidence="1">Belongs to the transketolase family. DXPS subfamily.</text>
</comment>
<accession>Q5WF63</accession>
<protein>
    <recommendedName>
        <fullName evidence="1">1-deoxy-D-xylulose-5-phosphate synthase</fullName>
        <ecNumber evidence="1">2.2.1.7</ecNumber>
    </recommendedName>
    <alternativeName>
        <fullName evidence="1">1-deoxyxylulose-5-phosphate synthase</fullName>
        <shortName evidence="1">DXP synthase</shortName>
        <shortName evidence="1">DXPS</shortName>
    </alternativeName>
</protein>
<keyword id="KW-0414">Isoprene biosynthesis</keyword>
<keyword id="KW-0460">Magnesium</keyword>
<keyword id="KW-0479">Metal-binding</keyword>
<keyword id="KW-1185">Reference proteome</keyword>
<keyword id="KW-0784">Thiamine biosynthesis</keyword>
<keyword id="KW-0786">Thiamine pyrophosphate</keyword>
<keyword id="KW-0808">Transferase</keyword>